<sequence length="276" mass="30212">MIKPKIALTIAGTDPTGGAGVMADLKSFHSCGVYGMGVVTSIVAQNTLGVQHIHNLNHQWVDEQLDSVFNDTLPHAIKTGMIATADTMETIRHYLMQHESIPYVIDPVMLAKSGDSLMDNNTKQNLQHTLLPLADVVTPNLPEAEEITGLTIDSEEKIMQAGRIFINEIGSKGVIIKGGHSNDADIAKDYLFTKEGVQTFENERFKTKHTHGTGCTFSAVITAELAKGRPLFEAVHKAKKFISMSIQYTPEIGRGRGPVNHFAYLKKEGLDDELSK</sequence>
<reference key="1">
    <citation type="journal article" date="2004" name="Proc. Natl. Acad. Sci. U.S.A.">
        <title>Complete genomes of two clinical Staphylococcus aureus strains: evidence for the rapid evolution of virulence and drug resistance.</title>
        <authorList>
            <person name="Holden M.T.G."/>
            <person name="Feil E.J."/>
            <person name="Lindsay J.A."/>
            <person name="Peacock S.J."/>
            <person name="Day N.P.J."/>
            <person name="Enright M.C."/>
            <person name="Foster T.J."/>
            <person name="Moore C.E."/>
            <person name="Hurst L."/>
            <person name="Atkin R."/>
            <person name="Barron A."/>
            <person name="Bason N."/>
            <person name="Bentley S.D."/>
            <person name="Chillingworth C."/>
            <person name="Chillingworth T."/>
            <person name="Churcher C."/>
            <person name="Clark L."/>
            <person name="Corton C."/>
            <person name="Cronin A."/>
            <person name="Doggett J."/>
            <person name="Dowd L."/>
            <person name="Feltwell T."/>
            <person name="Hance Z."/>
            <person name="Harris B."/>
            <person name="Hauser H."/>
            <person name="Holroyd S."/>
            <person name="Jagels K."/>
            <person name="James K.D."/>
            <person name="Lennard N."/>
            <person name="Line A."/>
            <person name="Mayes R."/>
            <person name="Moule S."/>
            <person name="Mungall K."/>
            <person name="Ormond D."/>
            <person name="Quail M.A."/>
            <person name="Rabbinowitsch E."/>
            <person name="Rutherford K.M."/>
            <person name="Sanders M."/>
            <person name="Sharp S."/>
            <person name="Simmonds M."/>
            <person name="Stevens K."/>
            <person name="Whitehead S."/>
            <person name="Barrell B.G."/>
            <person name="Spratt B.G."/>
            <person name="Parkhill J."/>
        </authorList>
    </citation>
    <scope>NUCLEOTIDE SEQUENCE [LARGE SCALE GENOMIC DNA]</scope>
    <source>
        <strain>MRSA252</strain>
    </source>
</reference>
<gene>
    <name type="primary">thiD</name>
    <name type="ordered locus">SAR2182</name>
</gene>
<feature type="chain" id="PRO_0000192030" description="Hydroxymethylpyrimidine/phosphomethylpyrimidine kinase">
    <location>
        <begin position="1"/>
        <end position="276"/>
    </location>
</feature>
<feature type="binding site" evidence="1">
    <location>
        <position position="45"/>
    </location>
    <ligand>
        <name>4-amino-5-hydroxymethyl-2-methylpyrimidine</name>
        <dbReference type="ChEBI" id="CHEBI:16892"/>
    </ligand>
</feature>
<comment type="function">
    <text evidence="2">Catalyzes the phosphorylation of hydroxymethylpyrimidine phosphate (HMP-P) to HMP-PP, and of HMP to HMP-P.</text>
</comment>
<comment type="catalytic activity">
    <reaction evidence="2">
        <text>4-amino-5-hydroxymethyl-2-methylpyrimidine + ATP = 4-amino-2-methyl-5-(phosphooxymethyl)pyrimidine + ADP + H(+)</text>
        <dbReference type="Rhea" id="RHEA:23096"/>
        <dbReference type="ChEBI" id="CHEBI:15378"/>
        <dbReference type="ChEBI" id="CHEBI:16892"/>
        <dbReference type="ChEBI" id="CHEBI:30616"/>
        <dbReference type="ChEBI" id="CHEBI:58354"/>
        <dbReference type="ChEBI" id="CHEBI:456216"/>
        <dbReference type="EC" id="2.7.1.49"/>
    </reaction>
</comment>
<comment type="catalytic activity">
    <reaction evidence="2">
        <text>4-amino-2-methyl-5-(phosphooxymethyl)pyrimidine + ATP = 4-amino-2-methyl-5-(diphosphooxymethyl)pyrimidine + ADP</text>
        <dbReference type="Rhea" id="RHEA:19893"/>
        <dbReference type="ChEBI" id="CHEBI:30616"/>
        <dbReference type="ChEBI" id="CHEBI:57841"/>
        <dbReference type="ChEBI" id="CHEBI:58354"/>
        <dbReference type="ChEBI" id="CHEBI:456216"/>
        <dbReference type="EC" id="2.7.4.7"/>
    </reaction>
</comment>
<comment type="pathway">
    <text>Cofactor biosynthesis; thiamine diphosphate biosynthesis; 4-amino-2-methyl-5-diphosphomethylpyrimidine from 5-amino-1-(5-phospho-D-ribosyl)imidazole: step 2/3.</text>
</comment>
<comment type="pathway">
    <text>Cofactor biosynthesis; thiamine diphosphate biosynthesis; 4-amino-2-methyl-5-diphosphomethylpyrimidine from 5-amino-1-(5-phospho-D-ribosyl)imidazole: step 3/3.</text>
</comment>
<comment type="similarity">
    <text evidence="3">Belongs to the ThiD family.</text>
</comment>
<name>THID_STAAR</name>
<proteinExistence type="inferred from homology"/>
<dbReference type="EC" id="2.7.1.49" evidence="2"/>
<dbReference type="EC" id="2.7.4.7" evidence="2"/>
<dbReference type="EMBL" id="BX571856">
    <property type="protein sequence ID" value="CAG41162.1"/>
    <property type="molecule type" value="Genomic_DNA"/>
</dbReference>
<dbReference type="RefSeq" id="WP_000594963.1">
    <property type="nucleotide sequence ID" value="NC_002952.2"/>
</dbReference>
<dbReference type="SMR" id="Q6GEY2"/>
<dbReference type="KEGG" id="sar:SAR2182"/>
<dbReference type="HOGENOM" id="CLU_020520_0_0_9"/>
<dbReference type="UniPathway" id="UPA00060">
    <property type="reaction ID" value="UER00137"/>
</dbReference>
<dbReference type="UniPathway" id="UPA00060">
    <property type="reaction ID" value="UER00138"/>
</dbReference>
<dbReference type="Proteomes" id="UP000000596">
    <property type="component" value="Chromosome"/>
</dbReference>
<dbReference type="GO" id="GO:0005829">
    <property type="term" value="C:cytosol"/>
    <property type="evidence" value="ECO:0007669"/>
    <property type="project" value="TreeGrafter"/>
</dbReference>
<dbReference type="GO" id="GO:0005524">
    <property type="term" value="F:ATP binding"/>
    <property type="evidence" value="ECO:0007669"/>
    <property type="project" value="UniProtKB-KW"/>
</dbReference>
<dbReference type="GO" id="GO:0008902">
    <property type="term" value="F:hydroxymethylpyrimidine kinase activity"/>
    <property type="evidence" value="ECO:0007669"/>
    <property type="project" value="UniProtKB-EC"/>
</dbReference>
<dbReference type="GO" id="GO:0008972">
    <property type="term" value="F:phosphomethylpyrimidine kinase activity"/>
    <property type="evidence" value="ECO:0007669"/>
    <property type="project" value="UniProtKB-EC"/>
</dbReference>
<dbReference type="GO" id="GO:0009228">
    <property type="term" value="P:thiamine biosynthetic process"/>
    <property type="evidence" value="ECO:0007669"/>
    <property type="project" value="UniProtKB-KW"/>
</dbReference>
<dbReference type="GO" id="GO:0009229">
    <property type="term" value="P:thiamine diphosphate biosynthetic process"/>
    <property type="evidence" value="ECO:0007669"/>
    <property type="project" value="UniProtKB-UniPathway"/>
</dbReference>
<dbReference type="CDD" id="cd01169">
    <property type="entry name" value="HMPP_kinase"/>
    <property type="match status" value="1"/>
</dbReference>
<dbReference type="FunFam" id="3.40.1190.20:FF:000003">
    <property type="entry name" value="Phosphomethylpyrimidine kinase ThiD"/>
    <property type="match status" value="1"/>
</dbReference>
<dbReference type="Gene3D" id="3.40.1190.20">
    <property type="match status" value="1"/>
</dbReference>
<dbReference type="InterPro" id="IPR004399">
    <property type="entry name" value="HMP/HMP-P_kinase_dom"/>
</dbReference>
<dbReference type="InterPro" id="IPR013749">
    <property type="entry name" value="PM/HMP-P_kinase-1"/>
</dbReference>
<dbReference type="InterPro" id="IPR029056">
    <property type="entry name" value="Ribokinase-like"/>
</dbReference>
<dbReference type="NCBIfam" id="TIGR00097">
    <property type="entry name" value="HMP-P_kinase"/>
    <property type="match status" value="1"/>
</dbReference>
<dbReference type="PANTHER" id="PTHR20858:SF17">
    <property type="entry name" value="HYDROXYMETHYLPYRIMIDINE_PHOSPHOMETHYLPYRIMIDINE KINASE THI20-RELATED"/>
    <property type="match status" value="1"/>
</dbReference>
<dbReference type="PANTHER" id="PTHR20858">
    <property type="entry name" value="PHOSPHOMETHYLPYRIMIDINE KINASE"/>
    <property type="match status" value="1"/>
</dbReference>
<dbReference type="Pfam" id="PF08543">
    <property type="entry name" value="Phos_pyr_kin"/>
    <property type="match status" value="1"/>
</dbReference>
<dbReference type="SUPFAM" id="SSF53613">
    <property type="entry name" value="Ribokinase-like"/>
    <property type="match status" value="1"/>
</dbReference>
<protein>
    <recommendedName>
        <fullName>Hydroxymethylpyrimidine/phosphomethylpyrimidine kinase</fullName>
        <ecNumber evidence="2">2.7.1.49</ecNumber>
        <ecNumber evidence="2">2.7.4.7</ecNumber>
    </recommendedName>
    <alternativeName>
        <fullName>Hydroxymethylpyrimidine kinase</fullName>
        <shortName>HMP kinase</shortName>
    </alternativeName>
    <alternativeName>
        <fullName>Hydroxymethylpyrimidine phosphate kinase</fullName>
        <shortName>HMP-P kinase</shortName>
        <shortName>HMP-phosphate kinase</shortName>
        <shortName>HMPP kinase</shortName>
    </alternativeName>
</protein>
<evidence type="ECO:0000250" key="1"/>
<evidence type="ECO:0000250" key="2">
    <source>
        <dbReference type="UniProtKB" id="P76422"/>
    </source>
</evidence>
<evidence type="ECO:0000305" key="3"/>
<keyword id="KW-0067">ATP-binding</keyword>
<keyword id="KW-0418">Kinase</keyword>
<keyword id="KW-0547">Nucleotide-binding</keyword>
<keyword id="KW-0784">Thiamine biosynthesis</keyword>
<keyword id="KW-0808">Transferase</keyword>
<organism>
    <name type="scientific">Staphylococcus aureus (strain MRSA252)</name>
    <dbReference type="NCBI Taxonomy" id="282458"/>
    <lineage>
        <taxon>Bacteria</taxon>
        <taxon>Bacillati</taxon>
        <taxon>Bacillota</taxon>
        <taxon>Bacilli</taxon>
        <taxon>Bacillales</taxon>
        <taxon>Staphylococcaceae</taxon>
        <taxon>Staphylococcus</taxon>
    </lineage>
</organism>
<accession>Q6GEY2</accession>